<proteinExistence type="inferred from homology"/>
<dbReference type="EMBL" id="BX571857">
    <property type="protein sequence ID" value="CAG43981.1"/>
    <property type="molecule type" value="Genomic_DNA"/>
</dbReference>
<dbReference type="RefSeq" id="WP_001030825.1">
    <property type="nucleotide sequence ID" value="NC_002953.3"/>
</dbReference>
<dbReference type="SMR" id="Q6G742"/>
<dbReference type="KEGG" id="sas:SAS2170"/>
<dbReference type="HOGENOM" id="CLU_056887_4_1_9"/>
<dbReference type="GO" id="GO:0005737">
    <property type="term" value="C:cytoplasm"/>
    <property type="evidence" value="ECO:0007669"/>
    <property type="project" value="UniProtKB-SubCell"/>
</dbReference>
<dbReference type="GO" id="GO:0097163">
    <property type="term" value="F:sulfur carrier activity"/>
    <property type="evidence" value="ECO:0007669"/>
    <property type="project" value="UniProtKB-UniRule"/>
</dbReference>
<dbReference type="GO" id="GO:0016783">
    <property type="term" value="F:sulfurtransferase activity"/>
    <property type="evidence" value="ECO:0007669"/>
    <property type="project" value="InterPro"/>
</dbReference>
<dbReference type="GO" id="GO:0006777">
    <property type="term" value="P:Mo-molybdopterin cofactor biosynthetic process"/>
    <property type="evidence" value="ECO:0007669"/>
    <property type="project" value="UniProtKB-UniRule"/>
</dbReference>
<dbReference type="Gene3D" id="3.10.20.10">
    <property type="match status" value="1"/>
</dbReference>
<dbReference type="Gene3D" id="3.40.140.10">
    <property type="entry name" value="Cytidine Deaminase, domain 2"/>
    <property type="match status" value="1"/>
</dbReference>
<dbReference type="HAMAP" id="MF_00187">
    <property type="entry name" value="FdhD"/>
    <property type="match status" value="1"/>
</dbReference>
<dbReference type="InterPro" id="IPR016193">
    <property type="entry name" value="Cytidine_deaminase-like"/>
</dbReference>
<dbReference type="InterPro" id="IPR003786">
    <property type="entry name" value="FdhD"/>
</dbReference>
<dbReference type="NCBIfam" id="TIGR00129">
    <property type="entry name" value="fdhD_narQ"/>
    <property type="match status" value="1"/>
</dbReference>
<dbReference type="PANTHER" id="PTHR30592">
    <property type="entry name" value="FORMATE DEHYDROGENASE"/>
    <property type="match status" value="1"/>
</dbReference>
<dbReference type="PANTHER" id="PTHR30592:SF1">
    <property type="entry name" value="SULFUR CARRIER PROTEIN FDHD"/>
    <property type="match status" value="1"/>
</dbReference>
<dbReference type="Pfam" id="PF02634">
    <property type="entry name" value="FdhD-NarQ"/>
    <property type="match status" value="1"/>
</dbReference>
<dbReference type="PIRSF" id="PIRSF015626">
    <property type="entry name" value="FdhD"/>
    <property type="match status" value="1"/>
</dbReference>
<dbReference type="SUPFAM" id="SSF53927">
    <property type="entry name" value="Cytidine deaminase-like"/>
    <property type="match status" value="1"/>
</dbReference>
<comment type="function">
    <text evidence="1">Required for formate dehydrogenase (FDH) activity. Acts as a sulfur carrier protein that transfers sulfur from IscS to the molybdenum cofactor prior to its insertion into FDH.</text>
</comment>
<comment type="subcellular location">
    <subcellularLocation>
        <location evidence="1">Cytoplasm</location>
    </subcellularLocation>
</comment>
<comment type="similarity">
    <text evidence="1">Belongs to the FdhD family.</text>
</comment>
<keyword id="KW-0963">Cytoplasm</keyword>
<keyword id="KW-0501">Molybdenum cofactor biosynthesis</keyword>
<organism>
    <name type="scientific">Staphylococcus aureus (strain MSSA476)</name>
    <dbReference type="NCBI Taxonomy" id="282459"/>
    <lineage>
        <taxon>Bacteria</taxon>
        <taxon>Bacillati</taxon>
        <taxon>Bacillota</taxon>
        <taxon>Bacilli</taxon>
        <taxon>Bacillales</taxon>
        <taxon>Staphylococcaceae</taxon>
        <taxon>Staphylococcus</taxon>
    </lineage>
</organism>
<reference key="1">
    <citation type="journal article" date="2004" name="Proc. Natl. Acad. Sci. U.S.A.">
        <title>Complete genomes of two clinical Staphylococcus aureus strains: evidence for the rapid evolution of virulence and drug resistance.</title>
        <authorList>
            <person name="Holden M.T.G."/>
            <person name="Feil E.J."/>
            <person name="Lindsay J.A."/>
            <person name="Peacock S.J."/>
            <person name="Day N.P.J."/>
            <person name="Enright M.C."/>
            <person name="Foster T.J."/>
            <person name="Moore C.E."/>
            <person name="Hurst L."/>
            <person name="Atkin R."/>
            <person name="Barron A."/>
            <person name="Bason N."/>
            <person name="Bentley S.D."/>
            <person name="Chillingworth C."/>
            <person name="Chillingworth T."/>
            <person name="Churcher C."/>
            <person name="Clark L."/>
            <person name="Corton C."/>
            <person name="Cronin A."/>
            <person name="Doggett J."/>
            <person name="Dowd L."/>
            <person name="Feltwell T."/>
            <person name="Hance Z."/>
            <person name="Harris B."/>
            <person name="Hauser H."/>
            <person name="Holroyd S."/>
            <person name="Jagels K."/>
            <person name="James K.D."/>
            <person name="Lennard N."/>
            <person name="Line A."/>
            <person name="Mayes R."/>
            <person name="Moule S."/>
            <person name="Mungall K."/>
            <person name="Ormond D."/>
            <person name="Quail M.A."/>
            <person name="Rabbinowitsch E."/>
            <person name="Rutherford K.M."/>
            <person name="Sanders M."/>
            <person name="Sharp S."/>
            <person name="Simmonds M."/>
            <person name="Stevens K."/>
            <person name="Whitehead S."/>
            <person name="Barrell B.G."/>
            <person name="Spratt B.G."/>
            <person name="Parkhill J."/>
        </authorList>
    </citation>
    <scope>NUCLEOTIDE SEQUENCE [LARGE SCALE GENOMIC DNA]</scope>
    <source>
        <strain>MSSA476</strain>
    </source>
</reference>
<evidence type="ECO:0000255" key="1">
    <source>
        <dbReference type="HAMAP-Rule" id="MF_00187"/>
    </source>
</evidence>
<gene>
    <name evidence="1" type="primary">fdhD</name>
    <name type="ordered locus">SAS2170</name>
</gene>
<protein>
    <recommendedName>
        <fullName evidence="1">Sulfur carrier protein FdhD</fullName>
    </recommendedName>
</protein>
<sequence>MNKDVSLGQPIVRYEDGKLFNTTDQYVTEFPLTIMVNGEEFATVICSPTNLEELVIGFLASEGAILKRDELKSVLIDDSKGFAHVELNKDLGDRFQYSTKRMIASCCGKSREFYFQNDAAIAKTSMSKITLTPMQIINMMTRLQSASHIYQETGGLHNAAISDGLTFFVHRQDIGRHNALDKLYGFCIQRHITVRDKVLIFSGRISSEILIKAAKIGVGVILSKSAPTTLAVTLANDLNITAVGFIRNGGFNIYSHPERIIDSEQ</sequence>
<name>FDHD_STAAS</name>
<feature type="chain" id="PRO_0000152926" description="Sulfur carrier protein FdhD">
    <location>
        <begin position="1"/>
        <end position="265"/>
    </location>
</feature>
<feature type="active site" description="Cysteine persulfide intermediate" evidence="1">
    <location>
        <position position="107"/>
    </location>
</feature>
<accession>Q6G742</accession>